<dbReference type="EMBL" id="AY059640">
    <property type="protein sequence ID" value="AAL17967.1"/>
    <property type="molecule type" value="mRNA"/>
</dbReference>
<dbReference type="EMBL" id="BC057556">
    <property type="protein sequence ID" value="AAH57556.1"/>
    <property type="molecule type" value="mRNA"/>
</dbReference>
<dbReference type="CCDS" id="CCDS24040.1"/>
<dbReference type="RefSeq" id="NP_660252.1">
    <property type="nucleotide sequence ID" value="NM_145217.2"/>
</dbReference>
<dbReference type="RefSeq" id="XP_006513501.1">
    <property type="nucleotide sequence ID" value="XM_006513438.5"/>
</dbReference>
<dbReference type="SMR" id="Q91Z61"/>
<dbReference type="BioGRID" id="229004">
    <property type="interactions" value="1"/>
</dbReference>
<dbReference type="FunCoup" id="Q91Z61">
    <property type="interactions" value="678"/>
</dbReference>
<dbReference type="IntAct" id="Q91Z61">
    <property type="interactions" value="1"/>
</dbReference>
<dbReference type="MINT" id="Q91Z61"/>
<dbReference type="STRING" id="10090.ENSMUSP00000055605"/>
<dbReference type="iPTMnet" id="Q91Z61"/>
<dbReference type="PhosphoSitePlus" id="Q91Z61"/>
<dbReference type="SwissPalm" id="Q91Z61"/>
<dbReference type="jPOST" id="Q91Z61"/>
<dbReference type="PaxDb" id="10090-ENSMUSP00000055605"/>
<dbReference type="PeptideAtlas" id="Q91Z61"/>
<dbReference type="ProteomicsDB" id="277453"/>
<dbReference type="Antibodypedia" id="23037">
    <property type="antibodies" value="234 antibodies from 29 providers"/>
</dbReference>
<dbReference type="DNASU" id="208666"/>
<dbReference type="Ensembl" id="ENSMUST00000055125.5">
    <property type="protein sequence ID" value="ENSMUSP00000055605.5"/>
    <property type="gene ID" value="ENSMUSG00000043670.5"/>
</dbReference>
<dbReference type="GeneID" id="208666"/>
<dbReference type="KEGG" id="mmu:208666"/>
<dbReference type="UCSC" id="uc007gfo.1">
    <property type="organism name" value="mouse"/>
</dbReference>
<dbReference type="AGR" id="MGI:2183442"/>
<dbReference type="CTD" id="148252"/>
<dbReference type="MGI" id="MGI:2183442">
    <property type="gene designation" value="Diras1"/>
</dbReference>
<dbReference type="VEuPathDB" id="HostDB:ENSMUSG00000043670"/>
<dbReference type="eggNOG" id="KOG0395">
    <property type="taxonomic scope" value="Eukaryota"/>
</dbReference>
<dbReference type="GeneTree" id="ENSGT00940000159915"/>
<dbReference type="HOGENOM" id="CLU_041217_9_8_1"/>
<dbReference type="InParanoid" id="Q91Z61"/>
<dbReference type="OMA" id="LGPIYQL"/>
<dbReference type="OrthoDB" id="265044at2759"/>
<dbReference type="PhylomeDB" id="Q91Z61"/>
<dbReference type="TreeFam" id="TF313014"/>
<dbReference type="BioGRID-ORCS" id="208666">
    <property type="hits" value="1 hit in 78 CRISPR screens"/>
</dbReference>
<dbReference type="PRO" id="PR:Q91Z61"/>
<dbReference type="Proteomes" id="UP000000589">
    <property type="component" value="Chromosome 10"/>
</dbReference>
<dbReference type="RNAct" id="Q91Z61">
    <property type="molecule type" value="protein"/>
</dbReference>
<dbReference type="Bgee" id="ENSMUSG00000043670">
    <property type="expression patterns" value="Expressed in retinal neural layer and 103 other cell types or tissues"/>
</dbReference>
<dbReference type="ExpressionAtlas" id="Q91Z61">
    <property type="expression patterns" value="baseline and differential"/>
</dbReference>
<dbReference type="GO" id="GO:0005886">
    <property type="term" value="C:plasma membrane"/>
    <property type="evidence" value="ECO:0007669"/>
    <property type="project" value="UniProtKB-SubCell"/>
</dbReference>
<dbReference type="GO" id="GO:0005525">
    <property type="term" value="F:GTP binding"/>
    <property type="evidence" value="ECO:0007669"/>
    <property type="project" value="UniProtKB-KW"/>
</dbReference>
<dbReference type="GO" id="GO:0003924">
    <property type="term" value="F:GTPase activity"/>
    <property type="evidence" value="ECO:0007669"/>
    <property type="project" value="Ensembl"/>
</dbReference>
<dbReference type="GO" id="GO:0007165">
    <property type="term" value="P:signal transduction"/>
    <property type="evidence" value="ECO:0007669"/>
    <property type="project" value="InterPro"/>
</dbReference>
<dbReference type="FunFam" id="3.40.50.300:FF:000303">
    <property type="entry name" value="GTP-binding protein Di-Ras2"/>
    <property type="match status" value="1"/>
</dbReference>
<dbReference type="Gene3D" id="3.40.50.300">
    <property type="entry name" value="P-loop containing nucleotide triphosphate hydrolases"/>
    <property type="match status" value="1"/>
</dbReference>
<dbReference type="InterPro" id="IPR027417">
    <property type="entry name" value="P-loop_NTPase"/>
</dbReference>
<dbReference type="InterPro" id="IPR005225">
    <property type="entry name" value="Small_GTP-bd"/>
</dbReference>
<dbReference type="InterPro" id="IPR001806">
    <property type="entry name" value="Small_GTPase"/>
</dbReference>
<dbReference type="InterPro" id="IPR020849">
    <property type="entry name" value="Small_GTPase_Ras-type"/>
</dbReference>
<dbReference type="NCBIfam" id="TIGR00231">
    <property type="entry name" value="small_GTP"/>
    <property type="match status" value="1"/>
</dbReference>
<dbReference type="PANTHER" id="PTHR24070">
    <property type="entry name" value="RAS, DI-RAS, AND RHEB FAMILY MEMBERS OF SMALL GTPASE SUPERFAMILY"/>
    <property type="match status" value="1"/>
</dbReference>
<dbReference type="Pfam" id="PF00071">
    <property type="entry name" value="Ras"/>
    <property type="match status" value="1"/>
</dbReference>
<dbReference type="PRINTS" id="PR00449">
    <property type="entry name" value="RASTRNSFRMNG"/>
</dbReference>
<dbReference type="SMART" id="SM00175">
    <property type="entry name" value="RAB"/>
    <property type="match status" value="1"/>
</dbReference>
<dbReference type="SMART" id="SM00173">
    <property type="entry name" value="RAS"/>
    <property type="match status" value="1"/>
</dbReference>
<dbReference type="SMART" id="SM00174">
    <property type="entry name" value="RHO"/>
    <property type="match status" value="1"/>
</dbReference>
<dbReference type="SUPFAM" id="SSF52540">
    <property type="entry name" value="P-loop containing nucleoside triphosphate hydrolases"/>
    <property type="match status" value="1"/>
</dbReference>
<dbReference type="PROSITE" id="PS51421">
    <property type="entry name" value="RAS"/>
    <property type="match status" value="1"/>
</dbReference>
<gene>
    <name type="primary">Diras1</name>
    <name type="synonym">Gbts1</name>
</gene>
<keyword id="KW-1003">Cell membrane</keyword>
<keyword id="KW-0342">GTP-binding</keyword>
<keyword id="KW-0449">Lipoprotein</keyword>
<keyword id="KW-0472">Membrane</keyword>
<keyword id="KW-0488">Methylation</keyword>
<keyword id="KW-0547">Nucleotide-binding</keyword>
<keyword id="KW-0636">Prenylation</keyword>
<keyword id="KW-1185">Reference proteome</keyword>
<reference key="1">
    <citation type="submission" date="2001-10" db="EMBL/GenBank/DDBJ databases">
        <title>Molecular cloning of GBTS1, a novel gene encoding a small GTP-binding tumor suppressor.</title>
        <authorList>
            <person name="Gong L."/>
            <person name="Wu K."/>
        </authorList>
    </citation>
    <scope>NUCLEOTIDE SEQUENCE [MRNA]</scope>
    <source>
        <strain>129/SvJ</strain>
    </source>
</reference>
<reference key="2">
    <citation type="journal article" date="2004" name="Genome Res.">
        <title>The status, quality, and expansion of the NIH full-length cDNA project: the Mammalian Gene Collection (MGC).</title>
        <authorList>
            <consortium name="The MGC Project Team"/>
        </authorList>
    </citation>
    <scope>NUCLEOTIDE SEQUENCE [LARGE SCALE MRNA]</scope>
    <source>
        <strain>C57BL/6J</strain>
        <tissue>Brain</tissue>
    </source>
</reference>
<reference key="3">
    <citation type="journal article" date="2010" name="Cell">
        <title>A tissue-specific atlas of mouse protein phosphorylation and expression.</title>
        <authorList>
            <person name="Huttlin E.L."/>
            <person name="Jedrychowski M.P."/>
            <person name="Elias J.E."/>
            <person name="Goswami T."/>
            <person name="Rad R."/>
            <person name="Beausoleil S.A."/>
            <person name="Villen J."/>
            <person name="Haas W."/>
            <person name="Sowa M.E."/>
            <person name="Gygi S.P."/>
        </authorList>
    </citation>
    <scope>IDENTIFICATION BY MASS SPECTROMETRY [LARGE SCALE ANALYSIS]</scope>
    <source>
        <tissue>Brain</tissue>
    </source>
</reference>
<organism>
    <name type="scientific">Mus musculus</name>
    <name type="common">Mouse</name>
    <dbReference type="NCBI Taxonomy" id="10090"/>
    <lineage>
        <taxon>Eukaryota</taxon>
        <taxon>Metazoa</taxon>
        <taxon>Chordata</taxon>
        <taxon>Craniata</taxon>
        <taxon>Vertebrata</taxon>
        <taxon>Euteleostomi</taxon>
        <taxon>Mammalia</taxon>
        <taxon>Eutheria</taxon>
        <taxon>Euarchontoglires</taxon>
        <taxon>Glires</taxon>
        <taxon>Rodentia</taxon>
        <taxon>Myomorpha</taxon>
        <taxon>Muroidea</taxon>
        <taxon>Muridae</taxon>
        <taxon>Murinae</taxon>
        <taxon>Mus</taxon>
        <taxon>Mus</taxon>
    </lineage>
</organism>
<name>DIRA1_MOUSE</name>
<feature type="chain" id="PRO_0000191649" description="GTP-binding protein Di-Ras1">
    <location>
        <begin position="1"/>
        <end position="195"/>
    </location>
</feature>
<feature type="propeptide" id="PRO_0000370776" description="Removed in mature form" evidence="4">
    <location>
        <begin position="196"/>
        <end position="198"/>
    </location>
</feature>
<feature type="short sequence motif" description="Effector region" evidence="4">
    <location>
        <begin position="36"/>
        <end position="44"/>
    </location>
</feature>
<feature type="binding site" evidence="2">
    <location>
        <begin position="17"/>
        <end position="22"/>
    </location>
    <ligand>
        <name>GTP</name>
        <dbReference type="ChEBI" id="CHEBI:37565"/>
    </ligand>
</feature>
<feature type="binding site" evidence="3">
    <location>
        <begin position="33"/>
        <end position="39"/>
    </location>
    <ligand>
        <name>GTP</name>
        <dbReference type="ChEBI" id="CHEBI:37565"/>
    </ligand>
</feature>
<feature type="binding site" evidence="3">
    <location>
        <begin position="61"/>
        <end position="65"/>
    </location>
    <ligand>
        <name>GTP</name>
        <dbReference type="ChEBI" id="CHEBI:37565"/>
    </ligand>
</feature>
<feature type="binding site" evidence="2">
    <location>
        <begin position="121"/>
        <end position="125"/>
    </location>
    <ligand>
        <name>GTP</name>
        <dbReference type="ChEBI" id="CHEBI:37565"/>
    </ligand>
</feature>
<feature type="binding site" evidence="3">
    <location>
        <begin position="151"/>
        <end position="152"/>
    </location>
    <ligand>
        <name>GTP</name>
        <dbReference type="ChEBI" id="CHEBI:37565"/>
    </ligand>
</feature>
<feature type="binding site" evidence="2">
    <location>
        <position position="151"/>
    </location>
    <ligand>
        <name>GTP</name>
        <dbReference type="ChEBI" id="CHEBI:37565"/>
    </ligand>
</feature>
<feature type="modified residue" description="Cysteine methyl ester" evidence="4">
    <location>
        <position position="195"/>
    </location>
</feature>
<feature type="lipid moiety-binding region" description="S-geranylgeranyl cysteine" evidence="1">
    <location>
        <position position="195"/>
    </location>
</feature>
<protein>
    <recommendedName>
        <fullName>GTP-binding protein Di-Ras1</fullName>
    </recommendedName>
    <alternativeName>
        <fullName>Distinct subgroup of the Ras family member 1</fullName>
    </alternativeName>
    <alternativeName>
        <fullName>Small GTP-binding tumor suppressor 1</fullName>
    </alternativeName>
</protein>
<proteinExistence type="evidence at protein level"/>
<accession>Q91Z61</accession>
<evidence type="ECO:0000250" key="1"/>
<evidence type="ECO:0000250" key="2">
    <source>
        <dbReference type="UniProtKB" id="O95057"/>
    </source>
</evidence>
<evidence type="ECO:0000250" key="3">
    <source>
        <dbReference type="UniProtKB" id="Q96HU8"/>
    </source>
</evidence>
<evidence type="ECO:0000255" key="4"/>
<evidence type="ECO:0000305" key="5"/>
<comment type="function">
    <text evidence="2">Displays low GTPase activity and exists predominantly in the GTP-bound form.</text>
</comment>
<comment type="subcellular location">
    <subcellularLocation>
        <location evidence="5">Cell membrane</location>
        <topology evidence="5">Lipid-anchor</topology>
        <orientation evidence="5">Cytoplasmic side</orientation>
    </subcellularLocation>
</comment>
<comment type="similarity">
    <text evidence="5">Belongs to the small GTPase superfamily. Di-Ras family.</text>
</comment>
<sequence>MPEQSNDYRVVVFGAGGVGKSSLVLRFVKGTFRDTYIPTIEDTYRQVISCDKSVCTLQITDTTGSHQFPAMQRLSISKGHAFILVFSVTSKQSLDELSPIYKLIVQIKGSVEDIPIMLVGNKCDETQREVHTREAQAVAQEWKCAFMETSAKMNYNVKELFQELLTLETRRSVSLSVDGKRSSKQKRADRIKGKCALM</sequence>